<evidence type="ECO:0000255" key="1">
    <source>
        <dbReference type="HAMAP-Rule" id="MF_04006"/>
    </source>
</evidence>
<evidence type="ECO:0000305" key="2"/>
<feature type="chain" id="PRO_0000133354" description="Protein E6">
    <location>
        <begin position="1"/>
        <end position="148"/>
    </location>
</feature>
<feature type="zinc finger region" evidence="1">
    <location>
        <begin position="31"/>
        <end position="67"/>
    </location>
</feature>
<feature type="zinc finger region" evidence="1">
    <location>
        <begin position="104"/>
        <end position="140"/>
    </location>
</feature>
<feature type="short sequence motif" description="PDZ-binding domain" evidence="1">
    <location>
        <begin position="146"/>
        <end position="148"/>
    </location>
</feature>
<name>VE6_HPV34</name>
<dbReference type="EMBL" id="X74476">
    <property type="protein sequence ID" value="CAA52555.1"/>
    <property type="molecule type" value="Genomic_DNA"/>
</dbReference>
<dbReference type="PIR" id="S36515">
    <property type="entry name" value="S36515"/>
</dbReference>
<dbReference type="RefSeq" id="NP_041807.1">
    <property type="nucleotide sequence ID" value="NC_001587.1"/>
</dbReference>
<dbReference type="SMR" id="P36811"/>
<dbReference type="GeneID" id="1489431"/>
<dbReference type="KEGG" id="vg:1489431"/>
<dbReference type="OrthoDB" id="27353at10239"/>
<dbReference type="Proteomes" id="UP000009171">
    <property type="component" value="Genome"/>
</dbReference>
<dbReference type="GO" id="GO:0030430">
    <property type="term" value="C:host cell cytoplasm"/>
    <property type="evidence" value="ECO:0007669"/>
    <property type="project" value="UniProtKB-SubCell"/>
</dbReference>
<dbReference type="GO" id="GO:0042025">
    <property type="term" value="C:host cell nucleus"/>
    <property type="evidence" value="ECO:0007669"/>
    <property type="project" value="UniProtKB-SubCell"/>
</dbReference>
<dbReference type="GO" id="GO:0003677">
    <property type="term" value="F:DNA binding"/>
    <property type="evidence" value="ECO:0007669"/>
    <property type="project" value="UniProtKB-UniRule"/>
</dbReference>
<dbReference type="GO" id="GO:0030165">
    <property type="term" value="F:PDZ domain binding"/>
    <property type="evidence" value="ECO:0007669"/>
    <property type="project" value="UniProtKB-UniRule"/>
</dbReference>
<dbReference type="GO" id="GO:0008270">
    <property type="term" value="F:zinc ion binding"/>
    <property type="evidence" value="ECO:0007669"/>
    <property type="project" value="UniProtKB-KW"/>
</dbReference>
<dbReference type="GO" id="GO:0006351">
    <property type="term" value="P:DNA-templated transcription"/>
    <property type="evidence" value="ECO:0007669"/>
    <property type="project" value="UniProtKB-UniRule"/>
</dbReference>
<dbReference type="GO" id="GO:0006355">
    <property type="term" value="P:regulation of DNA-templated transcription"/>
    <property type="evidence" value="ECO:0007669"/>
    <property type="project" value="UniProtKB-UniRule"/>
</dbReference>
<dbReference type="GO" id="GO:0052150">
    <property type="term" value="P:symbiont-mediated perturbation of host apoptosis"/>
    <property type="evidence" value="ECO:0007669"/>
    <property type="project" value="UniProtKB-KW"/>
</dbReference>
<dbReference type="GO" id="GO:0039648">
    <property type="term" value="P:symbiont-mediated perturbation of host ubiquitin-like protein modification"/>
    <property type="evidence" value="ECO:0007669"/>
    <property type="project" value="UniProtKB-UniRule"/>
</dbReference>
<dbReference type="GO" id="GO:0039548">
    <property type="term" value="P:symbiont-mediated suppression of host cytoplasmic pattern recognition receptor signaling pathway via inhibition of IRF3 activity"/>
    <property type="evidence" value="ECO:0007669"/>
    <property type="project" value="UniProtKB-UniRule"/>
</dbReference>
<dbReference type="GO" id="GO:0039502">
    <property type="term" value="P:symbiont-mediated suppression of host type I interferon-mediated signaling pathway"/>
    <property type="evidence" value="ECO:0007669"/>
    <property type="project" value="UniProtKB-UniRule"/>
</dbReference>
<dbReference type="FunFam" id="3.30.240.40:FF:000001">
    <property type="entry name" value="Protein E6"/>
    <property type="match status" value="1"/>
</dbReference>
<dbReference type="FunFam" id="3.30.240.40:FF:000002">
    <property type="entry name" value="Protein E6"/>
    <property type="match status" value="1"/>
</dbReference>
<dbReference type="Gene3D" id="3.30.240.40">
    <property type="entry name" value="E6 early regulatory protein"/>
    <property type="match status" value="2"/>
</dbReference>
<dbReference type="HAMAP" id="MF_04006">
    <property type="entry name" value="HPV_E6"/>
    <property type="match status" value="1"/>
</dbReference>
<dbReference type="InterPro" id="IPR001334">
    <property type="entry name" value="E6"/>
</dbReference>
<dbReference type="InterPro" id="IPR038575">
    <property type="entry name" value="E6_sf"/>
</dbReference>
<dbReference type="Pfam" id="PF00518">
    <property type="entry name" value="E6"/>
    <property type="match status" value="1"/>
</dbReference>
<dbReference type="SUPFAM" id="SSF161229">
    <property type="entry name" value="E6 C-terminal domain-like"/>
    <property type="match status" value="2"/>
</dbReference>
<sequence length="148" mass="17735">MFFPNPEERPYKLPALCEEVNISIHEIELDCVYCERQLYRCEVYDFIFRDLCVVYRKGKPLGVCQPCLLFYSKVRQYRRYNQSVYGRTLENLTNKQLCNILIRCGKCQKPLCPLEKQRHVDENKRFHQIADQWTGRCTQCWRPSATVV</sequence>
<organismHost>
    <name type="scientific">Homo sapiens</name>
    <name type="common">Human</name>
    <dbReference type="NCBI Taxonomy" id="9606"/>
</organismHost>
<protein>
    <recommendedName>
        <fullName evidence="1">Protein E6</fullName>
    </recommendedName>
</protein>
<gene>
    <name evidence="1" type="primary">E6</name>
</gene>
<keyword id="KW-0010">Activator</keyword>
<keyword id="KW-0238">DNA-binding</keyword>
<keyword id="KW-0244">Early protein</keyword>
<keyword id="KW-1035">Host cytoplasm</keyword>
<keyword id="KW-1048">Host nucleus</keyword>
<keyword id="KW-0945">Host-virus interaction</keyword>
<keyword id="KW-1090">Inhibition of host innate immune response by virus</keyword>
<keyword id="KW-1092">Inhibition of host IRF3 by virus</keyword>
<keyword id="KW-1113">Inhibition of host RLR pathway by virus</keyword>
<keyword id="KW-0479">Metal-binding</keyword>
<keyword id="KW-1119">Modulation of host cell apoptosis by virus</keyword>
<keyword id="KW-0553">Oncogene</keyword>
<keyword id="KW-1185">Reference proteome</keyword>
<keyword id="KW-0804">Transcription</keyword>
<keyword id="KW-0805">Transcription regulation</keyword>
<keyword id="KW-0899">Viral immunoevasion</keyword>
<keyword id="KW-0862">Zinc</keyword>
<keyword id="KW-0863">Zinc-finger</keyword>
<proteinExistence type="inferred from homology"/>
<comment type="function">
    <text evidence="1">Plays a major role in the induction and maintenance of cellular transformation. Acts mainly as an oncoprotein by stimulating the destruction of many host cell key regulatory proteins. E6 associates with host UBE3A/E6-AP ubiquitin-protein ligase, and inactivates tumor suppressors TP53 and TP73 by targeting them to the 26S proteasome for degradation. In turn, DNA damage and chromosomal instabilities increase and lead to cell proliferation and cancer development. The complex E6/E6AP targets several other substrates to degradation via the proteasome including host DLG1 or NFX1, a repressor of human telomerase reverse transcriptase (hTERT). The resulting increased expression of hTERT prevents the shortening of telomere length leading to cell immortalization. Other cellular targets including BAK1, Fas-associated death domain-containing protein (FADD) and procaspase 8, are degraded by E6/E6AP causing inhibition of apoptosis. E6 also inhibits immune response by interacting with host IRF3 and TYK2. These interactions prevent IRF3 transcriptional activities and inhibit TYK2-mediated JAK-STAT activation by interferon alpha resulting in inhibition of the interferon signaling pathway.</text>
</comment>
<comment type="subunit">
    <text evidence="1">Forms homodimers. Interacts with ubiquitin-protein ligase UBE3A/E6-AP and thus forms a complex with human TP53. Interacts with human NFX1 and MAGI3. Interacts with human IRF3; this interaction inhibits the establishment of antiviral state. Interacts with human TYK2; this interaction inhibits JAK-STAT activation by interferon alpha. Interacts with host DLG1; this interaction leads to the proteasomal degradation of DLG1.</text>
</comment>
<comment type="subcellular location">
    <subcellularLocation>
        <location evidence="1">Host cytoplasm</location>
    </subcellularLocation>
    <subcellularLocation>
        <location evidence="1">Host nucleus</location>
    </subcellularLocation>
</comment>
<comment type="miscellaneous">
    <text evidence="1">Belongs to the high risk human alphapapillomavirus family. The cancer-causing human papillomavirus E6 protein has a unique carboxy terminal PDZ domain containing substrate.</text>
</comment>
<comment type="similarity">
    <text evidence="2">Belongs to the papillomaviridae E6 protein family.</text>
</comment>
<accession>P36811</accession>
<organism>
    <name type="scientific">Human papillomavirus type 34</name>
    <dbReference type="NCBI Taxonomy" id="333764"/>
    <lineage>
        <taxon>Viruses</taxon>
        <taxon>Monodnaviria</taxon>
        <taxon>Shotokuvirae</taxon>
        <taxon>Cossaviricota</taxon>
        <taxon>Papovaviricetes</taxon>
        <taxon>Zurhausenvirales</taxon>
        <taxon>Papillomaviridae</taxon>
        <taxon>Firstpapillomavirinae</taxon>
        <taxon>Alphapapillomavirus</taxon>
        <taxon>Alphapapillomavirus 11</taxon>
    </lineage>
</organism>
<reference key="1">
    <citation type="journal article" date="1994" name="Curr. Top. Microbiol. Immunol.">
        <title>Primer-directed sequencing of human papillomavirus types.</title>
        <authorList>
            <person name="Delius H."/>
            <person name="Hofmann B."/>
        </authorList>
    </citation>
    <scope>NUCLEOTIDE SEQUENCE [GENOMIC DNA]</scope>
</reference>